<reference key="1">
    <citation type="journal article" date="2008" name="J. Bacteriol.">
        <title>The complete genome sequence of Escherichia coli DH10B: insights into the biology of a laboratory workhorse.</title>
        <authorList>
            <person name="Durfee T."/>
            <person name="Nelson R."/>
            <person name="Baldwin S."/>
            <person name="Plunkett G. III"/>
            <person name="Burland V."/>
            <person name="Mau B."/>
            <person name="Petrosino J.F."/>
            <person name="Qin X."/>
            <person name="Muzny D.M."/>
            <person name="Ayele M."/>
            <person name="Gibbs R.A."/>
            <person name="Csorgo B."/>
            <person name="Posfai G."/>
            <person name="Weinstock G.M."/>
            <person name="Blattner F.R."/>
        </authorList>
    </citation>
    <scope>NUCLEOTIDE SEQUENCE [LARGE SCALE GENOMIC DNA]</scope>
    <source>
        <strain>K12 / DH10B</strain>
    </source>
</reference>
<name>AROE_ECODH</name>
<organism>
    <name type="scientific">Escherichia coli (strain K12 / DH10B)</name>
    <dbReference type="NCBI Taxonomy" id="316385"/>
    <lineage>
        <taxon>Bacteria</taxon>
        <taxon>Pseudomonadati</taxon>
        <taxon>Pseudomonadota</taxon>
        <taxon>Gammaproteobacteria</taxon>
        <taxon>Enterobacterales</taxon>
        <taxon>Enterobacteriaceae</taxon>
        <taxon>Escherichia</taxon>
    </lineage>
</organism>
<protein>
    <recommendedName>
        <fullName evidence="1">Shikimate dehydrogenase (NADP(+))</fullName>
        <shortName evidence="1">SDH</shortName>
        <ecNumber evidence="1">1.1.1.25</ecNumber>
    </recommendedName>
</protein>
<evidence type="ECO:0000255" key="1">
    <source>
        <dbReference type="HAMAP-Rule" id="MF_00222"/>
    </source>
</evidence>
<sequence>METYAVFGNPIAHSKSPFIHQQFAQQLNIEHPYGRVLAPINDFINTLNAFFSAGGKGANVTVPFKEEAFARADELTERAALAGAVNTLMRLEDGRLLGDNTDGVGLLSDLERLSFIRPGLRILLIGAGGASRGVLLPLLSLDCAVTITNRTVSRAEELAKLFAHTGSIQALSMDELEGHEFDLIINATSSGISGDIPAIPSSLIHPGIYCYDMFYQKGKTPFLAWCEQRGSKRNADGLGMLVAQAAHAFLLWHGVLPDVEPVIKQLQEELSA</sequence>
<dbReference type="EC" id="1.1.1.25" evidence="1"/>
<dbReference type="EMBL" id="CP000948">
    <property type="protein sequence ID" value="ACB04344.1"/>
    <property type="molecule type" value="Genomic_DNA"/>
</dbReference>
<dbReference type="RefSeq" id="WP_000451243.1">
    <property type="nucleotide sequence ID" value="NC_010473.1"/>
</dbReference>
<dbReference type="SMR" id="B1X6D4"/>
<dbReference type="KEGG" id="ecd:ECDH10B_3456"/>
<dbReference type="HOGENOM" id="CLU_044063_2_1_6"/>
<dbReference type="UniPathway" id="UPA00053">
    <property type="reaction ID" value="UER00087"/>
</dbReference>
<dbReference type="GO" id="GO:0005829">
    <property type="term" value="C:cytosol"/>
    <property type="evidence" value="ECO:0007669"/>
    <property type="project" value="TreeGrafter"/>
</dbReference>
<dbReference type="GO" id="GO:0050661">
    <property type="term" value="F:NADP binding"/>
    <property type="evidence" value="ECO:0007669"/>
    <property type="project" value="InterPro"/>
</dbReference>
<dbReference type="GO" id="GO:0004764">
    <property type="term" value="F:shikimate 3-dehydrogenase (NADP+) activity"/>
    <property type="evidence" value="ECO:0007669"/>
    <property type="project" value="UniProtKB-UniRule"/>
</dbReference>
<dbReference type="GO" id="GO:0008652">
    <property type="term" value="P:amino acid biosynthetic process"/>
    <property type="evidence" value="ECO:0007669"/>
    <property type="project" value="UniProtKB-KW"/>
</dbReference>
<dbReference type="GO" id="GO:0009073">
    <property type="term" value="P:aromatic amino acid family biosynthetic process"/>
    <property type="evidence" value="ECO:0007669"/>
    <property type="project" value="UniProtKB-KW"/>
</dbReference>
<dbReference type="GO" id="GO:0009423">
    <property type="term" value="P:chorismate biosynthetic process"/>
    <property type="evidence" value="ECO:0007669"/>
    <property type="project" value="UniProtKB-UniRule"/>
</dbReference>
<dbReference type="GO" id="GO:0019632">
    <property type="term" value="P:shikimate metabolic process"/>
    <property type="evidence" value="ECO:0007669"/>
    <property type="project" value="InterPro"/>
</dbReference>
<dbReference type="CDD" id="cd01065">
    <property type="entry name" value="NAD_bind_Shikimate_DH"/>
    <property type="match status" value="1"/>
</dbReference>
<dbReference type="FunFam" id="3.40.50.10860:FF:000006">
    <property type="entry name" value="Shikimate dehydrogenase (NADP(+))"/>
    <property type="match status" value="1"/>
</dbReference>
<dbReference type="FunFam" id="3.40.50.720:FF:000104">
    <property type="entry name" value="Shikimate dehydrogenase (NADP(+))"/>
    <property type="match status" value="1"/>
</dbReference>
<dbReference type="Gene3D" id="3.40.50.10860">
    <property type="entry name" value="Leucine Dehydrogenase, chain A, domain 1"/>
    <property type="match status" value="1"/>
</dbReference>
<dbReference type="Gene3D" id="3.40.50.720">
    <property type="entry name" value="NAD(P)-binding Rossmann-like Domain"/>
    <property type="match status" value="1"/>
</dbReference>
<dbReference type="HAMAP" id="MF_00222">
    <property type="entry name" value="Shikimate_DH_AroE"/>
    <property type="match status" value="1"/>
</dbReference>
<dbReference type="InterPro" id="IPR046346">
    <property type="entry name" value="Aminoacid_DH-like_N_sf"/>
</dbReference>
<dbReference type="InterPro" id="IPR036291">
    <property type="entry name" value="NAD(P)-bd_dom_sf"/>
</dbReference>
<dbReference type="InterPro" id="IPR041121">
    <property type="entry name" value="SDH_C"/>
</dbReference>
<dbReference type="InterPro" id="IPR011342">
    <property type="entry name" value="Shikimate_DH"/>
</dbReference>
<dbReference type="InterPro" id="IPR013708">
    <property type="entry name" value="Shikimate_DH-bd_N"/>
</dbReference>
<dbReference type="InterPro" id="IPR022893">
    <property type="entry name" value="Shikimate_DH_fam"/>
</dbReference>
<dbReference type="InterPro" id="IPR006151">
    <property type="entry name" value="Shikm_DH/Glu-tRNA_Rdtase"/>
</dbReference>
<dbReference type="NCBIfam" id="TIGR00507">
    <property type="entry name" value="aroE"/>
    <property type="match status" value="1"/>
</dbReference>
<dbReference type="NCBIfam" id="NF001310">
    <property type="entry name" value="PRK00258.1-2"/>
    <property type="match status" value="1"/>
</dbReference>
<dbReference type="PANTHER" id="PTHR21089:SF1">
    <property type="entry name" value="BIFUNCTIONAL 3-DEHYDROQUINATE DEHYDRATASE_SHIKIMATE DEHYDROGENASE, CHLOROPLASTIC"/>
    <property type="match status" value="1"/>
</dbReference>
<dbReference type="PANTHER" id="PTHR21089">
    <property type="entry name" value="SHIKIMATE DEHYDROGENASE"/>
    <property type="match status" value="1"/>
</dbReference>
<dbReference type="Pfam" id="PF18317">
    <property type="entry name" value="SDH_C"/>
    <property type="match status" value="1"/>
</dbReference>
<dbReference type="Pfam" id="PF01488">
    <property type="entry name" value="Shikimate_DH"/>
    <property type="match status" value="1"/>
</dbReference>
<dbReference type="Pfam" id="PF08501">
    <property type="entry name" value="Shikimate_dh_N"/>
    <property type="match status" value="1"/>
</dbReference>
<dbReference type="SUPFAM" id="SSF53223">
    <property type="entry name" value="Aminoacid dehydrogenase-like, N-terminal domain"/>
    <property type="match status" value="1"/>
</dbReference>
<dbReference type="SUPFAM" id="SSF51735">
    <property type="entry name" value="NAD(P)-binding Rossmann-fold domains"/>
    <property type="match status" value="1"/>
</dbReference>
<feature type="chain" id="PRO_1000100116" description="Shikimate dehydrogenase (NADP(+))">
    <location>
        <begin position="1"/>
        <end position="272"/>
    </location>
</feature>
<feature type="active site" description="Proton acceptor" evidence="1">
    <location>
        <position position="65"/>
    </location>
</feature>
<feature type="binding site" evidence="1">
    <location>
        <begin position="14"/>
        <end position="16"/>
    </location>
    <ligand>
        <name>shikimate</name>
        <dbReference type="ChEBI" id="CHEBI:36208"/>
    </ligand>
</feature>
<feature type="binding site" evidence="1">
    <location>
        <position position="61"/>
    </location>
    <ligand>
        <name>shikimate</name>
        <dbReference type="ChEBI" id="CHEBI:36208"/>
    </ligand>
</feature>
<feature type="binding site" evidence="1">
    <location>
        <position position="77"/>
    </location>
    <ligand>
        <name>NADP(+)</name>
        <dbReference type="ChEBI" id="CHEBI:58349"/>
    </ligand>
</feature>
<feature type="binding site" evidence="1">
    <location>
        <position position="86"/>
    </location>
    <ligand>
        <name>shikimate</name>
        <dbReference type="ChEBI" id="CHEBI:36208"/>
    </ligand>
</feature>
<feature type="binding site" evidence="1">
    <location>
        <position position="102"/>
    </location>
    <ligand>
        <name>shikimate</name>
        <dbReference type="ChEBI" id="CHEBI:36208"/>
    </ligand>
</feature>
<feature type="binding site" evidence="1">
    <location>
        <begin position="126"/>
        <end position="130"/>
    </location>
    <ligand>
        <name>NADP(+)</name>
        <dbReference type="ChEBI" id="CHEBI:58349"/>
    </ligand>
</feature>
<feature type="binding site" evidence="1">
    <location>
        <begin position="149"/>
        <end position="154"/>
    </location>
    <ligand>
        <name>NADP(+)</name>
        <dbReference type="ChEBI" id="CHEBI:58349"/>
    </ligand>
</feature>
<feature type="binding site" evidence="1">
    <location>
        <position position="213"/>
    </location>
    <ligand>
        <name>NADP(+)</name>
        <dbReference type="ChEBI" id="CHEBI:58349"/>
    </ligand>
</feature>
<feature type="binding site" evidence="1">
    <location>
        <position position="215"/>
    </location>
    <ligand>
        <name>shikimate</name>
        <dbReference type="ChEBI" id="CHEBI:36208"/>
    </ligand>
</feature>
<feature type="binding site" evidence="1">
    <location>
        <position position="237"/>
    </location>
    <ligand>
        <name>NADP(+)</name>
        <dbReference type="ChEBI" id="CHEBI:58349"/>
    </ligand>
</feature>
<gene>
    <name evidence="1" type="primary">aroE</name>
    <name type="ordered locus">ECDH10B_3456</name>
</gene>
<accession>B1X6D4</accession>
<proteinExistence type="inferred from homology"/>
<comment type="function">
    <text evidence="1">Involved in the biosynthesis of the chorismate, which leads to the biosynthesis of aromatic amino acids. Catalyzes the reversible NADPH linked reduction of 3-dehydroshikimate (DHSA) to yield shikimate (SA).</text>
</comment>
<comment type="catalytic activity">
    <reaction evidence="1">
        <text>shikimate + NADP(+) = 3-dehydroshikimate + NADPH + H(+)</text>
        <dbReference type="Rhea" id="RHEA:17737"/>
        <dbReference type="ChEBI" id="CHEBI:15378"/>
        <dbReference type="ChEBI" id="CHEBI:16630"/>
        <dbReference type="ChEBI" id="CHEBI:36208"/>
        <dbReference type="ChEBI" id="CHEBI:57783"/>
        <dbReference type="ChEBI" id="CHEBI:58349"/>
        <dbReference type="EC" id="1.1.1.25"/>
    </reaction>
</comment>
<comment type="pathway">
    <text evidence="1">Metabolic intermediate biosynthesis; chorismate biosynthesis; chorismate from D-erythrose 4-phosphate and phosphoenolpyruvate: step 4/7.</text>
</comment>
<comment type="subunit">
    <text evidence="1">Homodimer.</text>
</comment>
<comment type="similarity">
    <text evidence="1">Belongs to the shikimate dehydrogenase family.</text>
</comment>
<keyword id="KW-0028">Amino-acid biosynthesis</keyword>
<keyword id="KW-0057">Aromatic amino acid biosynthesis</keyword>
<keyword id="KW-0521">NADP</keyword>
<keyword id="KW-0560">Oxidoreductase</keyword>